<proteinExistence type="inferred from homology"/>
<dbReference type="EMBL" id="U38804">
    <property type="protein sequence ID" value="AAC08197.1"/>
    <property type="molecule type" value="Genomic_DNA"/>
</dbReference>
<dbReference type="PIR" id="S73232">
    <property type="entry name" value="S73232"/>
</dbReference>
<dbReference type="RefSeq" id="NP_053921.1">
    <property type="nucleotide sequence ID" value="NC_000925.1"/>
</dbReference>
<dbReference type="SMR" id="P51311"/>
<dbReference type="GeneID" id="809940"/>
<dbReference type="GO" id="GO:0009507">
    <property type="term" value="C:chloroplast"/>
    <property type="evidence" value="ECO:0007669"/>
    <property type="project" value="UniProtKB-SubCell"/>
</dbReference>
<dbReference type="GO" id="GO:0005762">
    <property type="term" value="C:mitochondrial large ribosomal subunit"/>
    <property type="evidence" value="ECO:0007669"/>
    <property type="project" value="TreeGrafter"/>
</dbReference>
<dbReference type="GO" id="GO:0019843">
    <property type="term" value="F:rRNA binding"/>
    <property type="evidence" value="ECO:0007669"/>
    <property type="project" value="UniProtKB-UniRule"/>
</dbReference>
<dbReference type="GO" id="GO:0003735">
    <property type="term" value="F:structural constituent of ribosome"/>
    <property type="evidence" value="ECO:0007669"/>
    <property type="project" value="InterPro"/>
</dbReference>
<dbReference type="GO" id="GO:0016740">
    <property type="term" value="F:transferase activity"/>
    <property type="evidence" value="ECO:0007669"/>
    <property type="project" value="InterPro"/>
</dbReference>
<dbReference type="GO" id="GO:0032543">
    <property type="term" value="P:mitochondrial translation"/>
    <property type="evidence" value="ECO:0007669"/>
    <property type="project" value="TreeGrafter"/>
</dbReference>
<dbReference type="FunFam" id="2.30.30.30:FF:000001">
    <property type="entry name" value="50S ribosomal protein L2"/>
    <property type="match status" value="1"/>
</dbReference>
<dbReference type="FunFam" id="2.40.50.140:FF:000003">
    <property type="entry name" value="50S ribosomal protein L2"/>
    <property type="match status" value="1"/>
</dbReference>
<dbReference type="FunFam" id="4.10.950.10:FF:000001">
    <property type="entry name" value="50S ribosomal protein L2"/>
    <property type="match status" value="1"/>
</dbReference>
<dbReference type="Gene3D" id="2.30.30.30">
    <property type="match status" value="1"/>
</dbReference>
<dbReference type="Gene3D" id="2.40.50.140">
    <property type="entry name" value="Nucleic acid-binding proteins"/>
    <property type="match status" value="1"/>
</dbReference>
<dbReference type="Gene3D" id="4.10.950.10">
    <property type="entry name" value="Ribosomal protein L2, domain 3"/>
    <property type="match status" value="1"/>
</dbReference>
<dbReference type="HAMAP" id="MF_01320_B">
    <property type="entry name" value="Ribosomal_uL2_B"/>
    <property type="match status" value="1"/>
</dbReference>
<dbReference type="InterPro" id="IPR012340">
    <property type="entry name" value="NA-bd_OB-fold"/>
</dbReference>
<dbReference type="InterPro" id="IPR014722">
    <property type="entry name" value="Rib_uL2_dom2"/>
</dbReference>
<dbReference type="InterPro" id="IPR002171">
    <property type="entry name" value="Ribosomal_uL2"/>
</dbReference>
<dbReference type="InterPro" id="IPR005880">
    <property type="entry name" value="Ribosomal_uL2_bac/org-type"/>
</dbReference>
<dbReference type="InterPro" id="IPR022669">
    <property type="entry name" value="Ribosomal_uL2_C"/>
</dbReference>
<dbReference type="InterPro" id="IPR022671">
    <property type="entry name" value="Ribosomal_uL2_CS"/>
</dbReference>
<dbReference type="InterPro" id="IPR014726">
    <property type="entry name" value="Ribosomal_uL2_dom3"/>
</dbReference>
<dbReference type="InterPro" id="IPR022666">
    <property type="entry name" value="Ribosomal_uL2_RNA-bd_dom"/>
</dbReference>
<dbReference type="InterPro" id="IPR008991">
    <property type="entry name" value="Translation_prot_SH3-like_sf"/>
</dbReference>
<dbReference type="NCBIfam" id="TIGR01171">
    <property type="entry name" value="rplB_bact"/>
    <property type="match status" value="1"/>
</dbReference>
<dbReference type="PANTHER" id="PTHR13691:SF5">
    <property type="entry name" value="LARGE RIBOSOMAL SUBUNIT PROTEIN UL2M"/>
    <property type="match status" value="1"/>
</dbReference>
<dbReference type="PANTHER" id="PTHR13691">
    <property type="entry name" value="RIBOSOMAL PROTEIN L2"/>
    <property type="match status" value="1"/>
</dbReference>
<dbReference type="Pfam" id="PF00181">
    <property type="entry name" value="Ribosomal_L2"/>
    <property type="match status" value="1"/>
</dbReference>
<dbReference type="Pfam" id="PF03947">
    <property type="entry name" value="Ribosomal_L2_C"/>
    <property type="match status" value="1"/>
</dbReference>
<dbReference type="PIRSF" id="PIRSF002158">
    <property type="entry name" value="Ribosomal_L2"/>
    <property type="match status" value="1"/>
</dbReference>
<dbReference type="SMART" id="SM01383">
    <property type="entry name" value="Ribosomal_L2"/>
    <property type="match status" value="1"/>
</dbReference>
<dbReference type="SMART" id="SM01382">
    <property type="entry name" value="Ribosomal_L2_C"/>
    <property type="match status" value="1"/>
</dbReference>
<dbReference type="SUPFAM" id="SSF50249">
    <property type="entry name" value="Nucleic acid-binding proteins"/>
    <property type="match status" value="1"/>
</dbReference>
<dbReference type="SUPFAM" id="SSF50104">
    <property type="entry name" value="Translation proteins SH3-like domain"/>
    <property type="match status" value="1"/>
</dbReference>
<dbReference type="PROSITE" id="PS00467">
    <property type="entry name" value="RIBOSOMAL_L2"/>
    <property type="match status" value="1"/>
</dbReference>
<geneLocation type="chloroplast"/>
<name>RK2_PORPU</name>
<accession>P51311</accession>
<protein>
    <recommendedName>
        <fullName evidence="2">Large ribosomal subunit protein uL2c</fullName>
    </recommendedName>
    <alternativeName>
        <fullName evidence="4">50S ribosomal protein L2, chloroplastic</fullName>
    </alternativeName>
</protein>
<sequence length="294" mass="32595">MAIRLYRAYTPGTRNRTVSTFSEITTDKPEKSLINKHHFCKGRNNRGVITCRHKGGGHKQRYRLIDFKRNRHNIIAKVASIEYDPNRNARIALLHYLDGEKRYILHPRSLSVGAIVVSGPMAPIEVGNALPLSTIPLGTAVHNIELRPYCGGQIVRSAGTYAQIVAKEGNFVTVKLPSSEVRMIRKECYATIGQVGNIDASNITLGKAGRSRWLGKRPTVRGVVMNPVDHPHGGGGEGKSPIGRSRPVTPWGKPALGVKTRNPNKYSNPYVLLVVNKVYLTYNLILKYNVEINT</sequence>
<gene>
    <name type="primary">rpl2</name>
</gene>
<evidence type="ECO:0000250" key="1"/>
<evidence type="ECO:0000255" key="2">
    <source>
        <dbReference type="HAMAP-Rule" id="MF_01320"/>
    </source>
</evidence>
<evidence type="ECO:0000256" key="3">
    <source>
        <dbReference type="SAM" id="MobiDB-lite"/>
    </source>
</evidence>
<evidence type="ECO:0000305" key="4"/>
<comment type="subunit">
    <text evidence="1">Part of the 50S ribosomal subunit.</text>
</comment>
<comment type="subcellular location">
    <subcellularLocation>
        <location>Plastid</location>
        <location>Chloroplast</location>
    </subcellularLocation>
</comment>
<comment type="similarity">
    <text evidence="4">Belongs to the universal ribosomal protein uL2 family.</text>
</comment>
<feature type="chain" id="PRO_0000129698" description="Large ribosomal subunit protein uL2c">
    <location>
        <begin position="1"/>
        <end position="294"/>
    </location>
</feature>
<feature type="region of interest" description="Disordered" evidence="3">
    <location>
        <begin position="224"/>
        <end position="249"/>
    </location>
</feature>
<organism>
    <name type="scientific">Porphyra purpurea</name>
    <name type="common">Red seaweed</name>
    <name type="synonym">Ulva purpurea</name>
    <dbReference type="NCBI Taxonomy" id="2787"/>
    <lineage>
        <taxon>Eukaryota</taxon>
        <taxon>Rhodophyta</taxon>
        <taxon>Bangiophyceae</taxon>
        <taxon>Bangiales</taxon>
        <taxon>Bangiaceae</taxon>
        <taxon>Porphyra</taxon>
    </lineage>
</organism>
<keyword id="KW-0150">Chloroplast</keyword>
<keyword id="KW-0934">Plastid</keyword>
<keyword id="KW-0687">Ribonucleoprotein</keyword>
<keyword id="KW-0689">Ribosomal protein</keyword>
<reference key="1">
    <citation type="journal article" date="1995" name="Plant Mol. Biol. Rep.">
        <title>Complete nucleotide sequence of the Porphyra purpurea chloroplast genome.</title>
        <authorList>
            <person name="Reith M.E."/>
            <person name="Munholland J."/>
        </authorList>
    </citation>
    <scope>NUCLEOTIDE SEQUENCE [LARGE SCALE GENOMIC DNA]</scope>
    <source>
        <strain>Avonport</strain>
    </source>
</reference>